<sequence length="253" mass="27371">MHTKRIIPCLDVKEGRVVKGINFEGLVDVGDPVALAEYYNKQGADELVFLDITATHEKRGIMEKVVQSVAEKIFIPFTVGGGLQTLDDIKSILRAGADKVSLNSAAVRNKMLIKEGAFYFGSQCIVLAADAKKRSDNTGWNVVINGGRIDTGLDLLKWIEEATALGAGEILLTSMDADGTKKGFDLELTKAVSDITNVPVIASGGCGCLEDFYDVFKSNIADAALAASLFHYGELTVDEVKRYLHDKNVSVRI</sequence>
<accession>A6LT22</accession>
<feature type="chain" id="PRO_1000084054" description="Imidazole glycerol phosphate synthase subunit HisF">
    <location>
        <begin position="1"/>
        <end position="253"/>
    </location>
</feature>
<feature type="active site" evidence="1">
    <location>
        <position position="11"/>
    </location>
</feature>
<feature type="active site" evidence="1">
    <location>
        <position position="130"/>
    </location>
</feature>
<evidence type="ECO:0000255" key="1">
    <source>
        <dbReference type="HAMAP-Rule" id="MF_01013"/>
    </source>
</evidence>
<proteinExistence type="inferred from homology"/>
<gene>
    <name evidence="1" type="primary">hisF</name>
    <name type="ordered locus">Cbei_1322</name>
</gene>
<comment type="function">
    <text evidence="1">IGPS catalyzes the conversion of PRFAR and glutamine to IGP, AICAR and glutamate. The HisF subunit catalyzes the cyclization activity that produces IGP and AICAR from PRFAR using the ammonia provided by the HisH subunit.</text>
</comment>
<comment type="catalytic activity">
    <reaction evidence="1">
        <text>5-[(5-phospho-1-deoxy-D-ribulos-1-ylimino)methylamino]-1-(5-phospho-beta-D-ribosyl)imidazole-4-carboxamide + L-glutamine = D-erythro-1-(imidazol-4-yl)glycerol 3-phosphate + 5-amino-1-(5-phospho-beta-D-ribosyl)imidazole-4-carboxamide + L-glutamate + H(+)</text>
        <dbReference type="Rhea" id="RHEA:24793"/>
        <dbReference type="ChEBI" id="CHEBI:15378"/>
        <dbReference type="ChEBI" id="CHEBI:29985"/>
        <dbReference type="ChEBI" id="CHEBI:58278"/>
        <dbReference type="ChEBI" id="CHEBI:58359"/>
        <dbReference type="ChEBI" id="CHEBI:58475"/>
        <dbReference type="ChEBI" id="CHEBI:58525"/>
        <dbReference type="EC" id="4.3.2.10"/>
    </reaction>
</comment>
<comment type="pathway">
    <text evidence="1">Amino-acid biosynthesis; L-histidine biosynthesis; L-histidine from 5-phospho-alpha-D-ribose 1-diphosphate: step 5/9.</text>
</comment>
<comment type="subunit">
    <text evidence="1">Heterodimer of HisH and HisF.</text>
</comment>
<comment type="subcellular location">
    <subcellularLocation>
        <location evidence="1">Cytoplasm</location>
    </subcellularLocation>
</comment>
<comment type="similarity">
    <text evidence="1">Belongs to the HisA/HisF family.</text>
</comment>
<organism>
    <name type="scientific">Clostridium beijerinckii (strain ATCC 51743 / NCIMB 8052)</name>
    <name type="common">Clostridium acetobutylicum</name>
    <dbReference type="NCBI Taxonomy" id="290402"/>
    <lineage>
        <taxon>Bacteria</taxon>
        <taxon>Bacillati</taxon>
        <taxon>Bacillota</taxon>
        <taxon>Clostridia</taxon>
        <taxon>Eubacteriales</taxon>
        <taxon>Clostridiaceae</taxon>
        <taxon>Clostridium</taxon>
    </lineage>
</organism>
<protein>
    <recommendedName>
        <fullName evidence="1">Imidazole glycerol phosphate synthase subunit HisF</fullName>
        <ecNumber evidence="1">4.3.2.10</ecNumber>
    </recommendedName>
    <alternativeName>
        <fullName evidence="1">IGP synthase cyclase subunit</fullName>
    </alternativeName>
    <alternativeName>
        <fullName evidence="1">IGP synthase subunit HisF</fullName>
    </alternativeName>
    <alternativeName>
        <fullName evidence="1">ImGP synthase subunit HisF</fullName>
        <shortName evidence="1">IGPS subunit HisF</shortName>
    </alternativeName>
</protein>
<name>HIS6_CLOB8</name>
<dbReference type="EC" id="4.3.2.10" evidence="1"/>
<dbReference type="EMBL" id="CP000721">
    <property type="protein sequence ID" value="ABR33502.1"/>
    <property type="molecule type" value="Genomic_DNA"/>
</dbReference>
<dbReference type="RefSeq" id="WP_011968656.1">
    <property type="nucleotide sequence ID" value="NC_009617.1"/>
</dbReference>
<dbReference type="SMR" id="A6LT22"/>
<dbReference type="GeneID" id="66344314"/>
<dbReference type="KEGG" id="cbe:Cbei_1322"/>
<dbReference type="eggNOG" id="COG0107">
    <property type="taxonomic scope" value="Bacteria"/>
</dbReference>
<dbReference type="HOGENOM" id="CLU_048577_4_0_9"/>
<dbReference type="UniPathway" id="UPA00031">
    <property type="reaction ID" value="UER00010"/>
</dbReference>
<dbReference type="Proteomes" id="UP000000565">
    <property type="component" value="Chromosome"/>
</dbReference>
<dbReference type="GO" id="GO:0005737">
    <property type="term" value="C:cytoplasm"/>
    <property type="evidence" value="ECO:0007669"/>
    <property type="project" value="UniProtKB-SubCell"/>
</dbReference>
<dbReference type="GO" id="GO:0000107">
    <property type="term" value="F:imidazoleglycerol-phosphate synthase activity"/>
    <property type="evidence" value="ECO:0007669"/>
    <property type="project" value="UniProtKB-UniRule"/>
</dbReference>
<dbReference type="GO" id="GO:0016829">
    <property type="term" value="F:lyase activity"/>
    <property type="evidence" value="ECO:0007669"/>
    <property type="project" value="UniProtKB-KW"/>
</dbReference>
<dbReference type="GO" id="GO:0000105">
    <property type="term" value="P:L-histidine biosynthetic process"/>
    <property type="evidence" value="ECO:0007669"/>
    <property type="project" value="UniProtKB-UniRule"/>
</dbReference>
<dbReference type="CDD" id="cd04731">
    <property type="entry name" value="HisF"/>
    <property type="match status" value="1"/>
</dbReference>
<dbReference type="FunFam" id="3.20.20.70:FF:000006">
    <property type="entry name" value="Imidazole glycerol phosphate synthase subunit HisF"/>
    <property type="match status" value="1"/>
</dbReference>
<dbReference type="Gene3D" id="3.20.20.70">
    <property type="entry name" value="Aldolase class I"/>
    <property type="match status" value="1"/>
</dbReference>
<dbReference type="HAMAP" id="MF_01013">
    <property type="entry name" value="HisF"/>
    <property type="match status" value="1"/>
</dbReference>
<dbReference type="InterPro" id="IPR013785">
    <property type="entry name" value="Aldolase_TIM"/>
</dbReference>
<dbReference type="InterPro" id="IPR006062">
    <property type="entry name" value="His_biosynth"/>
</dbReference>
<dbReference type="InterPro" id="IPR004651">
    <property type="entry name" value="HisF"/>
</dbReference>
<dbReference type="InterPro" id="IPR050064">
    <property type="entry name" value="IGPS_HisA/HisF"/>
</dbReference>
<dbReference type="InterPro" id="IPR011060">
    <property type="entry name" value="RibuloseP-bd_barrel"/>
</dbReference>
<dbReference type="NCBIfam" id="TIGR00735">
    <property type="entry name" value="hisF"/>
    <property type="match status" value="1"/>
</dbReference>
<dbReference type="PANTHER" id="PTHR21235:SF2">
    <property type="entry name" value="IMIDAZOLE GLYCEROL PHOSPHATE SYNTHASE HISHF"/>
    <property type="match status" value="1"/>
</dbReference>
<dbReference type="PANTHER" id="PTHR21235">
    <property type="entry name" value="IMIDAZOLE GLYCEROL PHOSPHATE SYNTHASE SUBUNIT HISF/H IGP SYNTHASE SUBUNIT HISF/H"/>
    <property type="match status" value="1"/>
</dbReference>
<dbReference type="Pfam" id="PF00977">
    <property type="entry name" value="His_biosynth"/>
    <property type="match status" value="1"/>
</dbReference>
<dbReference type="SUPFAM" id="SSF51366">
    <property type="entry name" value="Ribulose-phoshate binding barrel"/>
    <property type="match status" value="1"/>
</dbReference>
<reference key="1">
    <citation type="submission" date="2007-06" db="EMBL/GenBank/DDBJ databases">
        <title>Complete sequence of Clostridium beijerinckii NCIMB 8052.</title>
        <authorList>
            <consortium name="US DOE Joint Genome Institute"/>
            <person name="Copeland A."/>
            <person name="Lucas S."/>
            <person name="Lapidus A."/>
            <person name="Barry K."/>
            <person name="Detter J.C."/>
            <person name="Glavina del Rio T."/>
            <person name="Hammon N."/>
            <person name="Israni S."/>
            <person name="Dalin E."/>
            <person name="Tice H."/>
            <person name="Pitluck S."/>
            <person name="Sims D."/>
            <person name="Brettin T."/>
            <person name="Bruce D."/>
            <person name="Tapia R."/>
            <person name="Brainard J."/>
            <person name="Schmutz J."/>
            <person name="Larimer F."/>
            <person name="Land M."/>
            <person name="Hauser L."/>
            <person name="Kyrpides N."/>
            <person name="Mikhailova N."/>
            <person name="Bennet G."/>
            <person name="Cann I."/>
            <person name="Chen J.-S."/>
            <person name="Contreras A.L."/>
            <person name="Jones D."/>
            <person name="Kashket E."/>
            <person name="Mitchell W."/>
            <person name="Stoddard S."/>
            <person name="Schwarz W."/>
            <person name="Qureshi N."/>
            <person name="Young M."/>
            <person name="Shi Z."/>
            <person name="Ezeji T."/>
            <person name="White B."/>
            <person name="Blaschek H."/>
            <person name="Richardson P."/>
        </authorList>
    </citation>
    <scope>NUCLEOTIDE SEQUENCE [LARGE SCALE GENOMIC DNA]</scope>
    <source>
        <strain>ATCC 51743 / NCIMB 8052</strain>
    </source>
</reference>
<keyword id="KW-0028">Amino-acid biosynthesis</keyword>
<keyword id="KW-0963">Cytoplasm</keyword>
<keyword id="KW-0368">Histidine biosynthesis</keyword>
<keyword id="KW-0456">Lyase</keyword>